<keyword id="KW-0408">Iron</keyword>
<keyword id="KW-1185">Reference proteome</keyword>
<dbReference type="EMBL" id="CP000038">
    <property type="protein sequence ID" value="AAZ89813.1"/>
    <property type="molecule type" value="Genomic_DNA"/>
</dbReference>
<dbReference type="RefSeq" id="WP_000091700.1">
    <property type="nucleotide sequence ID" value="NC_007384.1"/>
</dbReference>
<dbReference type="SMR" id="Q3YXE9"/>
<dbReference type="KEGG" id="ssn:SSON_3234"/>
<dbReference type="HOGENOM" id="CLU_170994_0_0_6"/>
<dbReference type="Proteomes" id="UP000002529">
    <property type="component" value="Chromosome"/>
</dbReference>
<dbReference type="GO" id="GO:0005829">
    <property type="term" value="C:cytosol"/>
    <property type="evidence" value="ECO:0007669"/>
    <property type="project" value="TreeGrafter"/>
</dbReference>
<dbReference type="GO" id="GO:0005506">
    <property type="term" value="F:iron ion binding"/>
    <property type="evidence" value="ECO:0007669"/>
    <property type="project" value="UniProtKB-UniRule"/>
</dbReference>
<dbReference type="GO" id="GO:0034599">
    <property type="term" value="P:cellular response to oxidative stress"/>
    <property type="evidence" value="ECO:0007669"/>
    <property type="project" value="TreeGrafter"/>
</dbReference>
<dbReference type="FunFam" id="1.10.3880.10:FF:000001">
    <property type="entry name" value="Probable Fe(2+)-trafficking protein"/>
    <property type="match status" value="1"/>
</dbReference>
<dbReference type="Gene3D" id="1.10.3880.10">
    <property type="entry name" value="Fe(II) trafficking protein YggX"/>
    <property type="match status" value="1"/>
</dbReference>
<dbReference type="HAMAP" id="MF_00686">
    <property type="entry name" value="Fe_traffic_YggX"/>
    <property type="match status" value="1"/>
</dbReference>
<dbReference type="InterPro" id="IPR007457">
    <property type="entry name" value="Fe_traffick_prot_YggX"/>
</dbReference>
<dbReference type="InterPro" id="IPR036766">
    <property type="entry name" value="Fe_traffick_prot_YggX_sf"/>
</dbReference>
<dbReference type="NCBIfam" id="NF003817">
    <property type="entry name" value="PRK05408.1"/>
    <property type="match status" value="1"/>
</dbReference>
<dbReference type="PANTHER" id="PTHR36965">
    <property type="entry name" value="FE(2+)-TRAFFICKING PROTEIN-RELATED"/>
    <property type="match status" value="1"/>
</dbReference>
<dbReference type="PANTHER" id="PTHR36965:SF1">
    <property type="entry name" value="FE(2+)-TRAFFICKING PROTEIN-RELATED"/>
    <property type="match status" value="1"/>
</dbReference>
<dbReference type="Pfam" id="PF04362">
    <property type="entry name" value="Iron_traffic"/>
    <property type="match status" value="1"/>
</dbReference>
<dbReference type="PIRSF" id="PIRSF029827">
    <property type="entry name" value="Fe_traffic_YggX"/>
    <property type="match status" value="1"/>
</dbReference>
<dbReference type="SUPFAM" id="SSF111148">
    <property type="entry name" value="YggX-like"/>
    <property type="match status" value="1"/>
</dbReference>
<feature type="chain" id="PRO_0000246118" description="Probable Fe(2+)-trafficking protein">
    <location>
        <begin position="1"/>
        <end position="91"/>
    </location>
</feature>
<name>FETP_SHISS</name>
<organism>
    <name type="scientific">Shigella sonnei (strain Ss046)</name>
    <dbReference type="NCBI Taxonomy" id="300269"/>
    <lineage>
        <taxon>Bacteria</taxon>
        <taxon>Pseudomonadati</taxon>
        <taxon>Pseudomonadota</taxon>
        <taxon>Gammaproteobacteria</taxon>
        <taxon>Enterobacterales</taxon>
        <taxon>Enterobacteriaceae</taxon>
        <taxon>Shigella</taxon>
    </lineage>
</organism>
<protein>
    <recommendedName>
        <fullName evidence="1">Probable Fe(2+)-trafficking protein</fullName>
    </recommendedName>
</protein>
<comment type="function">
    <text evidence="1">Could be a mediator in iron transactions between iron acquisition and iron-requiring processes, such as synthesis and/or repair of Fe-S clusters in biosynthetic enzymes.</text>
</comment>
<comment type="subunit">
    <text evidence="1">Monomer.</text>
</comment>
<comment type="similarity">
    <text evidence="1">Belongs to the Fe(2+)-trafficking protein family.</text>
</comment>
<sequence length="91" mass="10953">MSRTIFCTFLQREAEGQDFQLYPGELGKRIYNEISKEAWAQWQHKQTMLINEKKLNMMNAEHRKLLEQEMVNFLFEGKEVHIEGYTPEDKK</sequence>
<proteinExistence type="inferred from homology"/>
<evidence type="ECO:0000255" key="1">
    <source>
        <dbReference type="HAMAP-Rule" id="MF_00686"/>
    </source>
</evidence>
<reference key="1">
    <citation type="journal article" date="2005" name="Nucleic Acids Res.">
        <title>Genome dynamics and diversity of Shigella species, the etiologic agents of bacillary dysentery.</title>
        <authorList>
            <person name="Yang F."/>
            <person name="Yang J."/>
            <person name="Zhang X."/>
            <person name="Chen L."/>
            <person name="Jiang Y."/>
            <person name="Yan Y."/>
            <person name="Tang X."/>
            <person name="Wang J."/>
            <person name="Xiong Z."/>
            <person name="Dong J."/>
            <person name="Xue Y."/>
            <person name="Zhu Y."/>
            <person name="Xu X."/>
            <person name="Sun L."/>
            <person name="Chen S."/>
            <person name="Nie H."/>
            <person name="Peng J."/>
            <person name="Xu J."/>
            <person name="Wang Y."/>
            <person name="Yuan Z."/>
            <person name="Wen Y."/>
            <person name="Yao Z."/>
            <person name="Shen Y."/>
            <person name="Qiang B."/>
            <person name="Hou Y."/>
            <person name="Yu J."/>
            <person name="Jin Q."/>
        </authorList>
    </citation>
    <scope>NUCLEOTIDE SEQUENCE [LARGE SCALE GENOMIC DNA]</scope>
    <source>
        <strain>Ss046</strain>
    </source>
</reference>
<accession>Q3YXE9</accession>
<gene>
    <name evidence="1" type="primary">yggX</name>
    <name type="ordered locus">SSON_3234</name>
</gene>